<organism>
    <name type="scientific">Shigella boydii serotype 18 (strain CDC 3083-94 / BS512)</name>
    <dbReference type="NCBI Taxonomy" id="344609"/>
    <lineage>
        <taxon>Bacteria</taxon>
        <taxon>Pseudomonadati</taxon>
        <taxon>Pseudomonadota</taxon>
        <taxon>Gammaproteobacteria</taxon>
        <taxon>Enterobacterales</taxon>
        <taxon>Enterobacteriaceae</taxon>
        <taxon>Shigella</taxon>
    </lineage>
</organism>
<feature type="chain" id="PRO_1000089007" description="Adenine phosphoribosyltransferase">
    <location>
        <begin position="1"/>
        <end position="183"/>
    </location>
</feature>
<name>APT_SHIB3</name>
<dbReference type="EC" id="2.4.2.7" evidence="1"/>
<dbReference type="EMBL" id="CP001063">
    <property type="protein sequence ID" value="ACD10099.1"/>
    <property type="molecule type" value="Genomic_DNA"/>
</dbReference>
<dbReference type="RefSeq" id="WP_000127356.1">
    <property type="nucleotide sequence ID" value="NC_010658.1"/>
</dbReference>
<dbReference type="SMR" id="B2U4S2"/>
<dbReference type="STRING" id="344609.SbBS512_E0401"/>
<dbReference type="GeneID" id="93776981"/>
<dbReference type="KEGG" id="sbc:SbBS512_E0401"/>
<dbReference type="HOGENOM" id="CLU_063339_3_0_6"/>
<dbReference type="UniPathway" id="UPA00588">
    <property type="reaction ID" value="UER00646"/>
</dbReference>
<dbReference type="Proteomes" id="UP000001030">
    <property type="component" value="Chromosome"/>
</dbReference>
<dbReference type="GO" id="GO:0005737">
    <property type="term" value="C:cytoplasm"/>
    <property type="evidence" value="ECO:0007669"/>
    <property type="project" value="UniProtKB-SubCell"/>
</dbReference>
<dbReference type="GO" id="GO:0002055">
    <property type="term" value="F:adenine binding"/>
    <property type="evidence" value="ECO:0007669"/>
    <property type="project" value="TreeGrafter"/>
</dbReference>
<dbReference type="GO" id="GO:0003999">
    <property type="term" value="F:adenine phosphoribosyltransferase activity"/>
    <property type="evidence" value="ECO:0007669"/>
    <property type="project" value="UniProtKB-UniRule"/>
</dbReference>
<dbReference type="GO" id="GO:0016208">
    <property type="term" value="F:AMP binding"/>
    <property type="evidence" value="ECO:0007669"/>
    <property type="project" value="TreeGrafter"/>
</dbReference>
<dbReference type="GO" id="GO:0006168">
    <property type="term" value="P:adenine salvage"/>
    <property type="evidence" value="ECO:0007669"/>
    <property type="project" value="InterPro"/>
</dbReference>
<dbReference type="GO" id="GO:0044209">
    <property type="term" value="P:AMP salvage"/>
    <property type="evidence" value="ECO:0007669"/>
    <property type="project" value="UniProtKB-UniRule"/>
</dbReference>
<dbReference type="GO" id="GO:0006166">
    <property type="term" value="P:purine ribonucleoside salvage"/>
    <property type="evidence" value="ECO:0007669"/>
    <property type="project" value="UniProtKB-KW"/>
</dbReference>
<dbReference type="CDD" id="cd06223">
    <property type="entry name" value="PRTases_typeI"/>
    <property type="match status" value="1"/>
</dbReference>
<dbReference type="FunFam" id="3.40.50.2020:FF:000004">
    <property type="entry name" value="Adenine phosphoribosyltransferase"/>
    <property type="match status" value="1"/>
</dbReference>
<dbReference type="Gene3D" id="3.40.50.2020">
    <property type="match status" value="1"/>
</dbReference>
<dbReference type="HAMAP" id="MF_00004">
    <property type="entry name" value="Aden_phosphoribosyltr"/>
    <property type="match status" value="1"/>
</dbReference>
<dbReference type="InterPro" id="IPR005764">
    <property type="entry name" value="Ade_phspho_trans"/>
</dbReference>
<dbReference type="InterPro" id="IPR000836">
    <property type="entry name" value="PRibTrfase_dom"/>
</dbReference>
<dbReference type="InterPro" id="IPR029057">
    <property type="entry name" value="PRTase-like"/>
</dbReference>
<dbReference type="InterPro" id="IPR050054">
    <property type="entry name" value="UPRTase/APRTase"/>
</dbReference>
<dbReference type="NCBIfam" id="TIGR01090">
    <property type="entry name" value="apt"/>
    <property type="match status" value="1"/>
</dbReference>
<dbReference type="NCBIfam" id="NF002632">
    <property type="entry name" value="PRK02304.1-1"/>
    <property type="match status" value="1"/>
</dbReference>
<dbReference type="NCBIfam" id="NF002633">
    <property type="entry name" value="PRK02304.1-2"/>
    <property type="match status" value="1"/>
</dbReference>
<dbReference type="NCBIfam" id="NF002634">
    <property type="entry name" value="PRK02304.1-3"/>
    <property type="match status" value="1"/>
</dbReference>
<dbReference type="NCBIfam" id="NF002636">
    <property type="entry name" value="PRK02304.1-5"/>
    <property type="match status" value="1"/>
</dbReference>
<dbReference type="PANTHER" id="PTHR32315">
    <property type="entry name" value="ADENINE PHOSPHORIBOSYLTRANSFERASE"/>
    <property type="match status" value="1"/>
</dbReference>
<dbReference type="PANTHER" id="PTHR32315:SF3">
    <property type="entry name" value="ADENINE PHOSPHORIBOSYLTRANSFERASE"/>
    <property type="match status" value="1"/>
</dbReference>
<dbReference type="Pfam" id="PF00156">
    <property type="entry name" value="Pribosyltran"/>
    <property type="match status" value="1"/>
</dbReference>
<dbReference type="SUPFAM" id="SSF53271">
    <property type="entry name" value="PRTase-like"/>
    <property type="match status" value="1"/>
</dbReference>
<dbReference type="PROSITE" id="PS00103">
    <property type="entry name" value="PUR_PYR_PR_TRANSFER"/>
    <property type="match status" value="1"/>
</dbReference>
<accession>B2U4S2</accession>
<proteinExistence type="inferred from homology"/>
<gene>
    <name evidence="1" type="primary">apt</name>
    <name type="ordered locus">SbBS512_E0401</name>
</gene>
<comment type="function">
    <text evidence="1">Catalyzes a salvage reaction resulting in the formation of AMP, that is energically less costly than de novo synthesis.</text>
</comment>
<comment type="catalytic activity">
    <reaction evidence="1">
        <text>AMP + diphosphate = 5-phospho-alpha-D-ribose 1-diphosphate + adenine</text>
        <dbReference type="Rhea" id="RHEA:16609"/>
        <dbReference type="ChEBI" id="CHEBI:16708"/>
        <dbReference type="ChEBI" id="CHEBI:33019"/>
        <dbReference type="ChEBI" id="CHEBI:58017"/>
        <dbReference type="ChEBI" id="CHEBI:456215"/>
        <dbReference type="EC" id="2.4.2.7"/>
    </reaction>
</comment>
<comment type="pathway">
    <text evidence="1">Purine metabolism; AMP biosynthesis via salvage pathway; AMP from adenine: step 1/1.</text>
</comment>
<comment type="subunit">
    <text evidence="1">Homodimer.</text>
</comment>
<comment type="subcellular location">
    <subcellularLocation>
        <location evidence="1">Cytoplasm</location>
    </subcellularLocation>
</comment>
<comment type="similarity">
    <text evidence="1">Belongs to the purine/pyrimidine phosphoribosyltransferase family.</text>
</comment>
<evidence type="ECO:0000255" key="1">
    <source>
        <dbReference type="HAMAP-Rule" id="MF_00004"/>
    </source>
</evidence>
<sequence length="183" mass="19859">MTATAQQLEYLKNSIKSIQDYPKPGILFRDVTSLLEDPKAYALSIDLLVERYKNAGITKVVGTEARGFLFGAPVALGLGVGFVPVRKPGKLPRETISETYDLEYGTDQLEIHVDAIKPGDKVLVVDDLLATGGTIEATVKLIRRLGGEVADAAFIINLFDLGGEQRLEKQGITSYSLVPFPGH</sequence>
<keyword id="KW-0963">Cytoplasm</keyword>
<keyword id="KW-0328">Glycosyltransferase</keyword>
<keyword id="KW-0660">Purine salvage</keyword>
<keyword id="KW-1185">Reference proteome</keyword>
<keyword id="KW-0808">Transferase</keyword>
<reference key="1">
    <citation type="submission" date="2008-05" db="EMBL/GenBank/DDBJ databases">
        <title>Complete sequence of Shigella boydii serotype 18 strain BS512.</title>
        <authorList>
            <person name="Rasko D.A."/>
            <person name="Rosovitz M."/>
            <person name="Maurelli A.T."/>
            <person name="Myers G."/>
            <person name="Seshadri R."/>
            <person name="Cer R."/>
            <person name="Jiang L."/>
            <person name="Ravel J."/>
            <person name="Sebastian Y."/>
        </authorList>
    </citation>
    <scope>NUCLEOTIDE SEQUENCE [LARGE SCALE GENOMIC DNA]</scope>
    <source>
        <strain>CDC 3083-94 / BS512</strain>
    </source>
</reference>
<protein>
    <recommendedName>
        <fullName evidence="1">Adenine phosphoribosyltransferase</fullName>
        <shortName evidence="1">APRT</shortName>
        <ecNumber evidence="1">2.4.2.7</ecNumber>
    </recommendedName>
</protein>